<keyword id="KW-0488">Methylation</keyword>
<keyword id="KW-0687">Ribonucleoprotein</keyword>
<keyword id="KW-0689">Ribosomal protein</keyword>
<keyword id="KW-0694">RNA-binding</keyword>
<keyword id="KW-0699">rRNA-binding</keyword>
<name>RL3_SHESA</name>
<feature type="chain" id="PRO_1000052139" description="Large ribosomal subunit protein uL3">
    <location>
        <begin position="1"/>
        <end position="212"/>
    </location>
</feature>
<feature type="region of interest" description="Disordered" evidence="2">
    <location>
        <begin position="136"/>
        <end position="155"/>
    </location>
</feature>
<feature type="modified residue" description="N5-methylglutamine" evidence="1">
    <location>
        <position position="153"/>
    </location>
</feature>
<organism>
    <name type="scientific">Shewanella sp. (strain ANA-3)</name>
    <dbReference type="NCBI Taxonomy" id="94122"/>
    <lineage>
        <taxon>Bacteria</taxon>
        <taxon>Pseudomonadati</taxon>
        <taxon>Pseudomonadota</taxon>
        <taxon>Gammaproteobacteria</taxon>
        <taxon>Alteromonadales</taxon>
        <taxon>Shewanellaceae</taxon>
        <taxon>Shewanella</taxon>
    </lineage>
</organism>
<accession>A0KRM4</accession>
<dbReference type="EMBL" id="CP000469">
    <property type="protein sequence ID" value="ABK46443.1"/>
    <property type="molecule type" value="Genomic_DNA"/>
</dbReference>
<dbReference type="RefSeq" id="WP_011070617.1">
    <property type="nucleotide sequence ID" value="NC_008577.1"/>
</dbReference>
<dbReference type="SMR" id="A0KRM4"/>
<dbReference type="STRING" id="94122.Shewana3_0199"/>
<dbReference type="GeneID" id="94726186"/>
<dbReference type="KEGG" id="shn:Shewana3_0199"/>
<dbReference type="eggNOG" id="COG0087">
    <property type="taxonomic scope" value="Bacteria"/>
</dbReference>
<dbReference type="HOGENOM" id="CLU_044142_4_1_6"/>
<dbReference type="OrthoDB" id="9806135at2"/>
<dbReference type="Proteomes" id="UP000002589">
    <property type="component" value="Chromosome"/>
</dbReference>
<dbReference type="GO" id="GO:0022625">
    <property type="term" value="C:cytosolic large ribosomal subunit"/>
    <property type="evidence" value="ECO:0007669"/>
    <property type="project" value="TreeGrafter"/>
</dbReference>
<dbReference type="GO" id="GO:0019843">
    <property type="term" value="F:rRNA binding"/>
    <property type="evidence" value="ECO:0007669"/>
    <property type="project" value="UniProtKB-UniRule"/>
</dbReference>
<dbReference type="GO" id="GO:0003735">
    <property type="term" value="F:structural constituent of ribosome"/>
    <property type="evidence" value="ECO:0007669"/>
    <property type="project" value="InterPro"/>
</dbReference>
<dbReference type="GO" id="GO:0006412">
    <property type="term" value="P:translation"/>
    <property type="evidence" value="ECO:0007669"/>
    <property type="project" value="UniProtKB-UniRule"/>
</dbReference>
<dbReference type="FunFam" id="2.40.30.10:FF:000004">
    <property type="entry name" value="50S ribosomal protein L3"/>
    <property type="match status" value="1"/>
</dbReference>
<dbReference type="FunFam" id="3.30.160.810:FF:000001">
    <property type="entry name" value="50S ribosomal protein L3"/>
    <property type="match status" value="1"/>
</dbReference>
<dbReference type="Gene3D" id="3.30.160.810">
    <property type="match status" value="1"/>
</dbReference>
<dbReference type="Gene3D" id="2.40.30.10">
    <property type="entry name" value="Translation factors"/>
    <property type="match status" value="1"/>
</dbReference>
<dbReference type="HAMAP" id="MF_01325_B">
    <property type="entry name" value="Ribosomal_uL3_B"/>
    <property type="match status" value="1"/>
</dbReference>
<dbReference type="InterPro" id="IPR000597">
    <property type="entry name" value="Ribosomal_uL3"/>
</dbReference>
<dbReference type="InterPro" id="IPR019927">
    <property type="entry name" value="Ribosomal_uL3_bac/org-type"/>
</dbReference>
<dbReference type="InterPro" id="IPR019926">
    <property type="entry name" value="Ribosomal_uL3_CS"/>
</dbReference>
<dbReference type="InterPro" id="IPR009000">
    <property type="entry name" value="Transl_B-barrel_sf"/>
</dbReference>
<dbReference type="NCBIfam" id="TIGR03625">
    <property type="entry name" value="L3_bact"/>
    <property type="match status" value="1"/>
</dbReference>
<dbReference type="PANTHER" id="PTHR11229">
    <property type="entry name" value="50S RIBOSOMAL PROTEIN L3"/>
    <property type="match status" value="1"/>
</dbReference>
<dbReference type="PANTHER" id="PTHR11229:SF16">
    <property type="entry name" value="LARGE RIBOSOMAL SUBUNIT PROTEIN UL3C"/>
    <property type="match status" value="1"/>
</dbReference>
<dbReference type="Pfam" id="PF00297">
    <property type="entry name" value="Ribosomal_L3"/>
    <property type="match status" value="1"/>
</dbReference>
<dbReference type="SUPFAM" id="SSF50447">
    <property type="entry name" value="Translation proteins"/>
    <property type="match status" value="1"/>
</dbReference>
<dbReference type="PROSITE" id="PS00474">
    <property type="entry name" value="RIBOSOMAL_L3"/>
    <property type="match status" value="1"/>
</dbReference>
<reference key="1">
    <citation type="submission" date="2006-09" db="EMBL/GenBank/DDBJ databases">
        <title>Complete sequence of chromosome 1 of Shewanella sp. ANA-3.</title>
        <authorList>
            <person name="Copeland A."/>
            <person name="Lucas S."/>
            <person name="Lapidus A."/>
            <person name="Barry K."/>
            <person name="Detter J.C."/>
            <person name="Glavina del Rio T."/>
            <person name="Hammon N."/>
            <person name="Israni S."/>
            <person name="Dalin E."/>
            <person name="Tice H."/>
            <person name="Pitluck S."/>
            <person name="Chertkov O."/>
            <person name="Brettin T."/>
            <person name="Bruce D."/>
            <person name="Han C."/>
            <person name="Tapia R."/>
            <person name="Gilna P."/>
            <person name="Schmutz J."/>
            <person name="Larimer F."/>
            <person name="Land M."/>
            <person name="Hauser L."/>
            <person name="Kyrpides N."/>
            <person name="Kim E."/>
            <person name="Newman D."/>
            <person name="Salticov C."/>
            <person name="Konstantinidis K."/>
            <person name="Klappenback J."/>
            <person name="Tiedje J."/>
            <person name="Richardson P."/>
        </authorList>
    </citation>
    <scope>NUCLEOTIDE SEQUENCE [LARGE SCALE GENOMIC DNA]</scope>
    <source>
        <strain>ANA-3</strain>
    </source>
</reference>
<evidence type="ECO:0000255" key="1">
    <source>
        <dbReference type="HAMAP-Rule" id="MF_01325"/>
    </source>
</evidence>
<evidence type="ECO:0000256" key="2">
    <source>
        <dbReference type="SAM" id="MobiDB-lite"/>
    </source>
</evidence>
<evidence type="ECO:0000305" key="3"/>
<gene>
    <name evidence="1" type="primary">rplC</name>
    <name type="ordered locus">Shewana3_0199</name>
</gene>
<comment type="function">
    <text evidence="1">One of the primary rRNA binding proteins, it binds directly near the 3'-end of the 23S rRNA, where it nucleates assembly of the 50S subunit.</text>
</comment>
<comment type="subunit">
    <text evidence="1">Part of the 50S ribosomal subunit. Forms a cluster with proteins L14 and L19.</text>
</comment>
<comment type="PTM">
    <text evidence="1">Methylated by PrmB.</text>
</comment>
<comment type="similarity">
    <text evidence="1">Belongs to the universal ribosomal protein uL3 family.</text>
</comment>
<proteinExistence type="inferred from homology"/>
<sequence>MAIGLIGRKVGMTRIFTEDGVSIPVTVIEVAGNRVTQVKTLETDGYRALQVTTGTKKANRITKPEAGHFAKSGVEAGRGLWELRLADGEGEGIEVGAELNVGIFADVAKVDVTGQSKGKGFQGGVKRWNFRTQDMTHGNSLSHRSNGSIGQNQTPGRVFKGKKMSGHMGAERVTTQNLDVVRVDVERNLLLVKGAVPGATNGDLIIKPAVKA</sequence>
<protein>
    <recommendedName>
        <fullName evidence="1">Large ribosomal subunit protein uL3</fullName>
    </recommendedName>
    <alternativeName>
        <fullName evidence="3">50S ribosomal protein L3</fullName>
    </alternativeName>
</protein>